<accession>P58465</accession>
<accession>Q52KL5</accession>
<comment type="function">
    <text evidence="1">Preferentially catalyzes the dephosphorylation of 'Ser-5' within the tandem 7 residue repeats in the C-terminal domain (CTD) of the largest RNA polymerase II subunit POLR2A. Negatively regulates RNA polymerase II transcription, possibly by controlling the transition from initiation/capping to processive transcript elongation. Recruited by REST to neuronal genes that contain RE-1 elements, leading to neuronal gene silencing in non-neuronal cells (By similarity).</text>
</comment>
<comment type="catalytic activity">
    <reaction>
        <text>O-phospho-L-seryl-[protein] + H2O = L-seryl-[protein] + phosphate</text>
        <dbReference type="Rhea" id="RHEA:20629"/>
        <dbReference type="Rhea" id="RHEA-COMP:9863"/>
        <dbReference type="Rhea" id="RHEA-COMP:11604"/>
        <dbReference type="ChEBI" id="CHEBI:15377"/>
        <dbReference type="ChEBI" id="CHEBI:29999"/>
        <dbReference type="ChEBI" id="CHEBI:43474"/>
        <dbReference type="ChEBI" id="CHEBI:83421"/>
        <dbReference type="EC" id="3.1.3.16"/>
    </reaction>
</comment>
<comment type="catalytic activity">
    <reaction>
        <text>O-phospho-L-threonyl-[protein] + H2O = L-threonyl-[protein] + phosphate</text>
        <dbReference type="Rhea" id="RHEA:47004"/>
        <dbReference type="Rhea" id="RHEA-COMP:11060"/>
        <dbReference type="Rhea" id="RHEA-COMP:11605"/>
        <dbReference type="ChEBI" id="CHEBI:15377"/>
        <dbReference type="ChEBI" id="CHEBI:30013"/>
        <dbReference type="ChEBI" id="CHEBI:43474"/>
        <dbReference type="ChEBI" id="CHEBI:61977"/>
        <dbReference type="EC" id="3.1.3.16"/>
    </reaction>
</comment>
<comment type="cofactor">
    <cofactor evidence="1">
        <name>Mg(2+)</name>
        <dbReference type="ChEBI" id="CHEBI:18420"/>
    </cofactor>
    <text evidence="1">Binds 1 Mg(2+) ion per monomer.</text>
</comment>
<comment type="subunit">
    <text evidence="1">Monomer. Interacts with REST.</text>
</comment>
<comment type="subcellular location">
    <subcellularLocation>
        <location evidence="1">Nucleus</location>
    </subcellularLocation>
</comment>
<proteinExistence type="evidence at transcript level"/>
<reference key="1">
    <citation type="submission" date="2001-08" db="EMBL/GenBank/DDBJ databases">
        <title>Refined physical mapping and genomic structure of a 4-Mb region (AP-20) on human chromosome 3p22-p21.33 implicated in lung and kidney cancerogenesis.</title>
        <authorList>
            <person name="Protopopov A."/>
            <person name="Kashuba V."/>
            <person name="Zabarovsky E."/>
        </authorList>
    </citation>
    <scope>NUCLEOTIDE SEQUENCE [MRNA]</scope>
    <source>
        <strain>BALB/cJ</strain>
    </source>
</reference>
<reference key="2">
    <citation type="journal article" date="2009" name="PLoS Biol.">
        <title>Lineage-specific biology revealed by a finished genome assembly of the mouse.</title>
        <authorList>
            <person name="Church D.M."/>
            <person name="Goodstadt L."/>
            <person name="Hillier L.W."/>
            <person name="Zody M.C."/>
            <person name="Goldstein S."/>
            <person name="She X."/>
            <person name="Bult C.J."/>
            <person name="Agarwala R."/>
            <person name="Cherry J.L."/>
            <person name="DiCuccio M."/>
            <person name="Hlavina W."/>
            <person name="Kapustin Y."/>
            <person name="Meric P."/>
            <person name="Maglott D."/>
            <person name="Birtle Z."/>
            <person name="Marques A.C."/>
            <person name="Graves T."/>
            <person name="Zhou S."/>
            <person name="Teague B."/>
            <person name="Potamousis K."/>
            <person name="Churas C."/>
            <person name="Place M."/>
            <person name="Herschleb J."/>
            <person name="Runnheim R."/>
            <person name="Forrest D."/>
            <person name="Amos-Landgraf J."/>
            <person name="Schwartz D.C."/>
            <person name="Cheng Z."/>
            <person name="Lindblad-Toh K."/>
            <person name="Eichler E.E."/>
            <person name="Ponting C.P."/>
        </authorList>
    </citation>
    <scope>NUCLEOTIDE SEQUENCE [LARGE SCALE GENOMIC DNA]</scope>
    <source>
        <strain>C57BL/6J</strain>
    </source>
</reference>
<reference key="3">
    <citation type="journal article" date="2004" name="Genome Res.">
        <title>The status, quality, and expansion of the NIH full-length cDNA project: the Mammalian Gene Collection (MGC).</title>
        <authorList>
            <consortium name="The MGC Project Team"/>
        </authorList>
    </citation>
    <scope>NUCLEOTIDE SEQUENCE [LARGE SCALE MRNA]</scope>
    <source>
        <strain>FVB/N</strain>
        <tissue>Colon</tissue>
    </source>
</reference>
<sequence>MDGPAIITQVTNPKEDEARSPVAGEKASQRNISLKKQRGRSILSSFFCCFRDYNVEAPPANSPSVLPPLVEENGGLQKGDQRQVIPVPSPPAKYLLPEVTVLDYGKKCVVIDLDETLVHSSFKPISNADFIVPVEIDGTIHQVYVLKRPHVDEFLQRMGQLFECVLFTASLAKYADPVADLLDRWGVFRARLFRESCVFHRGNYVKDLSRLGRELSKVIIVDNSPASYIFHPENAVPVQSWFDDMTDTELLDLIPFFEGLSREDDVYSMLHRLCSR</sequence>
<feature type="chain" id="PRO_0000212570" description="CTD small phosphatase-like protein">
    <location>
        <begin position="1"/>
        <end position="276"/>
    </location>
</feature>
<feature type="domain" description="FCP1 homology" evidence="2">
    <location>
        <begin position="102"/>
        <end position="260"/>
    </location>
</feature>
<feature type="region of interest" description="Disordered" evidence="3">
    <location>
        <begin position="1"/>
        <end position="31"/>
    </location>
</feature>
<feature type="active site" description="4-aspartylphosphate intermediate" evidence="1">
    <location>
        <position position="112"/>
    </location>
</feature>
<feature type="active site" description="Proton donor" evidence="1">
    <location>
        <position position="114"/>
    </location>
</feature>
<feature type="binding site" evidence="1">
    <location>
        <position position="112"/>
    </location>
    <ligand>
        <name>Mg(2+)</name>
        <dbReference type="ChEBI" id="CHEBI:18420"/>
    </ligand>
</feature>
<feature type="binding site" evidence="1">
    <location>
        <position position="114"/>
    </location>
    <ligand>
        <name>Mg(2+)</name>
        <dbReference type="ChEBI" id="CHEBI:18420"/>
    </ligand>
</feature>
<feature type="binding site" evidence="1">
    <location>
        <position position="223"/>
    </location>
    <ligand>
        <name>Mg(2+)</name>
        <dbReference type="ChEBI" id="CHEBI:18420"/>
    </ligand>
</feature>
<feature type="site" description="Transition state stabilizer" evidence="1">
    <location>
        <position position="168"/>
    </location>
</feature>
<feature type="site" description="Transition state stabilizer" evidence="1">
    <location>
        <position position="206"/>
    </location>
</feature>
<feature type="sequence conflict" description="In Ref. 1; CAC69078." evidence="4" ref="1">
    <original>Q</original>
    <variation>E</variation>
    <location>
        <position position="37"/>
    </location>
</feature>
<gene>
    <name type="primary">Ctdspl</name>
    <name type="synonym">Nif1</name>
    <name type="synonym">Nifl</name>
</gene>
<keyword id="KW-0378">Hydrolase</keyword>
<keyword id="KW-0460">Magnesium</keyword>
<keyword id="KW-0479">Metal-binding</keyword>
<keyword id="KW-0539">Nucleus</keyword>
<keyword id="KW-0904">Protein phosphatase</keyword>
<keyword id="KW-1185">Reference proteome</keyword>
<dbReference type="EC" id="3.1.3.16"/>
<dbReference type="EMBL" id="AJ344340">
    <property type="protein sequence ID" value="CAC69078.2"/>
    <property type="molecule type" value="mRNA"/>
</dbReference>
<dbReference type="EMBL" id="AC055818">
    <property type="status" value="NOT_ANNOTATED_CDS"/>
    <property type="molecule type" value="Genomic_DNA"/>
</dbReference>
<dbReference type="EMBL" id="AC156800">
    <property type="status" value="NOT_ANNOTATED_CDS"/>
    <property type="molecule type" value="Genomic_DNA"/>
</dbReference>
<dbReference type="EMBL" id="BC094289">
    <property type="protein sequence ID" value="AAH94289.1"/>
    <property type="molecule type" value="mRNA"/>
</dbReference>
<dbReference type="CCDS" id="CCDS23605.1"/>
<dbReference type="RefSeq" id="NP_598471.3">
    <property type="nucleotide sequence ID" value="NM_133710.3"/>
</dbReference>
<dbReference type="SMR" id="P58465"/>
<dbReference type="FunCoup" id="P58465">
    <property type="interactions" value="1269"/>
</dbReference>
<dbReference type="STRING" id="10090.ENSMUSP00000072852"/>
<dbReference type="iPTMnet" id="P58465"/>
<dbReference type="PhosphoSitePlus" id="P58465"/>
<dbReference type="SwissPalm" id="P58465"/>
<dbReference type="jPOST" id="P58465"/>
<dbReference type="PaxDb" id="10090-ENSMUSP00000072852"/>
<dbReference type="ProteomicsDB" id="284140"/>
<dbReference type="Pumba" id="P58465"/>
<dbReference type="Antibodypedia" id="28378">
    <property type="antibodies" value="177 antibodies from 22 providers"/>
</dbReference>
<dbReference type="DNASU" id="69274"/>
<dbReference type="Ensembl" id="ENSMUST00000073109.12">
    <property type="protein sequence ID" value="ENSMUSP00000072852.6"/>
    <property type="gene ID" value="ENSMUSG00000047409.14"/>
</dbReference>
<dbReference type="GeneID" id="69274"/>
<dbReference type="KEGG" id="mmu:69274"/>
<dbReference type="UCSC" id="uc009rzz.2">
    <property type="organism name" value="mouse"/>
</dbReference>
<dbReference type="AGR" id="MGI:1916524"/>
<dbReference type="CTD" id="10217"/>
<dbReference type="MGI" id="MGI:1916524">
    <property type="gene designation" value="Ctdspl"/>
</dbReference>
<dbReference type="VEuPathDB" id="HostDB:ENSMUSG00000047409"/>
<dbReference type="eggNOG" id="KOG1605">
    <property type="taxonomic scope" value="Eukaryota"/>
</dbReference>
<dbReference type="GeneTree" id="ENSGT01040000240451"/>
<dbReference type="InParanoid" id="P58465"/>
<dbReference type="OMA" id="SHKGNYV"/>
<dbReference type="OrthoDB" id="277011at2759"/>
<dbReference type="PhylomeDB" id="P58465"/>
<dbReference type="TreeFam" id="TF313556"/>
<dbReference type="BioGRID-ORCS" id="69274">
    <property type="hits" value="2 hits in 79 CRISPR screens"/>
</dbReference>
<dbReference type="ChiTaRS" id="Ctdspl">
    <property type="organism name" value="mouse"/>
</dbReference>
<dbReference type="PRO" id="PR:P58465"/>
<dbReference type="Proteomes" id="UP000000589">
    <property type="component" value="Chromosome 9"/>
</dbReference>
<dbReference type="RNAct" id="P58465">
    <property type="molecule type" value="protein"/>
</dbReference>
<dbReference type="Bgee" id="ENSMUSG00000047409">
    <property type="expression patterns" value="Expressed in humerus cartilage element and 213 other cell types or tissues"/>
</dbReference>
<dbReference type="ExpressionAtlas" id="P58465">
    <property type="expression patterns" value="baseline and differential"/>
</dbReference>
<dbReference type="GO" id="GO:0005634">
    <property type="term" value="C:nucleus"/>
    <property type="evidence" value="ECO:0007669"/>
    <property type="project" value="UniProtKB-SubCell"/>
</dbReference>
<dbReference type="GO" id="GO:0046872">
    <property type="term" value="F:metal ion binding"/>
    <property type="evidence" value="ECO:0007669"/>
    <property type="project" value="UniProtKB-KW"/>
</dbReference>
<dbReference type="GO" id="GO:0008420">
    <property type="term" value="F:RNA polymerase II CTD heptapeptide repeat phosphatase activity"/>
    <property type="evidence" value="ECO:0007669"/>
    <property type="project" value="InterPro"/>
</dbReference>
<dbReference type="GO" id="GO:2000134">
    <property type="term" value="P:negative regulation of G1/S transition of mitotic cell cycle"/>
    <property type="evidence" value="ECO:0000314"/>
    <property type="project" value="MGI"/>
</dbReference>
<dbReference type="CDD" id="cd07521">
    <property type="entry name" value="HAD_FCP1-like"/>
    <property type="match status" value="1"/>
</dbReference>
<dbReference type="FunFam" id="3.40.50.1000:FF:000013">
    <property type="entry name" value="Carboxy-terminal domain RNA polymerase II polypeptide A small"/>
    <property type="match status" value="1"/>
</dbReference>
<dbReference type="Gene3D" id="3.40.50.1000">
    <property type="entry name" value="HAD superfamily/HAD-like"/>
    <property type="match status" value="1"/>
</dbReference>
<dbReference type="InterPro" id="IPR011948">
    <property type="entry name" value="Dullard_phosphatase"/>
</dbReference>
<dbReference type="InterPro" id="IPR004274">
    <property type="entry name" value="FCP1_dom"/>
</dbReference>
<dbReference type="InterPro" id="IPR036412">
    <property type="entry name" value="HAD-like_sf"/>
</dbReference>
<dbReference type="InterPro" id="IPR023214">
    <property type="entry name" value="HAD_sf"/>
</dbReference>
<dbReference type="InterPro" id="IPR040078">
    <property type="entry name" value="RNA_Pol_CTD_Phosphatase"/>
</dbReference>
<dbReference type="InterPro" id="IPR050365">
    <property type="entry name" value="TIM50"/>
</dbReference>
<dbReference type="NCBIfam" id="TIGR02251">
    <property type="entry name" value="HIF-SF_euk"/>
    <property type="match status" value="1"/>
</dbReference>
<dbReference type="PANTHER" id="PTHR12210">
    <property type="entry name" value="DULLARD PROTEIN PHOSPHATASE"/>
    <property type="match status" value="1"/>
</dbReference>
<dbReference type="Pfam" id="PF03031">
    <property type="entry name" value="NIF"/>
    <property type="match status" value="1"/>
</dbReference>
<dbReference type="SFLD" id="SFLDG01124">
    <property type="entry name" value="C0.1:_RNA_Pol_CTD_Phosphatase"/>
    <property type="match status" value="1"/>
</dbReference>
<dbReference type="SFLD" id="SFLDS00003">
    <property type="entry name" value="Haloacid_Dehalogenase"/>
    <property type="match status" value="1"/>
</dbReference>
<dbReference type="SMART" id="SM00577">
    <property type="entry name" value="CPDc"/>
    <property type="match status" value="1"/>
</dbReference>
<dbReference type="SUPFAM" id="SSF56784">
    <property type="entry name" value="HAD-like"/>
    <property type="match status" value="1"/>
</dbReference>
<dbReference type="PROSITE" id="PS50969">
    <property type="entry name" value="FCP1"/>
    <property type="match status" value="1"/>
</dbReference>
<evidence type="ECO:0000250" key="1"/>
<evidence type="ECO:0000255" key="2">
    <source>
        <dbReference type="PROSITE-ProRule" id="PRU00336"/>
    </source>
</evidence>
<evidence type="ECO:0000256" key="3">
    <source>
        <dbReference type="SAM" id="MobiDB-lite"/>
    </source>
</evidence>
<evidence type="ECO:0000305" key="4"/>
<protein>
    <recommendedName>
        <fullName>CTD small phosphatase-like protein</fullName>
        <shortName>CTDSP-like</shortName>
        <ecNumber>3.1.3.16</ecNumber>
    </recommendedName>
    <alternativeName>
        <fullName>Carboxy-terminal domain RNA polymerase II polypeptide A small phosphatase 3</fullName>
    </alternativeName>
    <alternativeName>
        <fullName>NIF-like protein</fullName>
    </alternativeName>
    <alternativeName>
        <fullName>Nuclear LIM interactor-interacting factor 1</fullName>
        <shortName>NLI-interacting factor 1</shortName>
    </alternativeName>
    <alternativeName>
        <fullName>Small C-terminal domain phosphatase 3</fullName>
        <shortName>SCP3</shortName>
        <shortName>Small CTD phosphatase 3</shortName>
    </alternativeName>
</protein>
<name>CTDSL_MOUSE</name>
<organism>
    <name type="scientific">Mus musculus</name>
    <name type="common">Mouse</name>
    <dbReference type="NCBI Taxonomy" id="10090"/>
    <lineage>
        <taxon>Eukaryota</taxon>
        <taxon>Metazoa</taxon>
        <taxon>Chordata</taxon>
        <taxon>Craniata</taxon>
        <taxon>Vertebrata</taxon>
        <taxon>Euteleostomi</taxon>
        <taxon>Mammalia</taxon>
        <taxon>Eutheria</taxon>
        <taxon>Euarchontoglires</taxon>
        <taxon>Glires</taxon>
        <taxon>Rodentia</taxon>
        <taxon>Myomorpha</taxon>
        <taxon>Muroidea</taxon>
        <taxon>Muridae</taxon>
        <taxon>Murinae</taxon>
        <taxon>Mus</taxon>
        <taxon>Mus</taxon>
    </lineage>
</organism>